<accession>C3MAY6</accession>
<evidence type="ECO:0000255" key="1">
    <source>
        <dbReference type="HAMAP-Rule" id="MF_01309"/>
    </source>
</evidence>
<evidence type="ECO:0000256" key="2">
    <source>
        <dbReference type="SAM" id="MobiDB-lite"/>
    </source>
</evidence>
<evidence type="ECO:0000305" key="3"/>
<reference key="1">
    <citation type="journal article" date="2009" name="Appl. Environ. Microbiol.">
        <title>Rhizobium sp. strain NGR234 possesses a remarkable number of secretion systems.</title>
        <authorList>
            <person name="Schmeisser C."/>
            <person name="Liesegang H."/>
            <person name="Krysciak D."/>
            <person name="Bakkou N."/>
            <person name="Le Quere A."/>
            <person name="Wollherr A."/>
            <person name="Heinemeyer I."/>
            <person name="Morgenstern B."/>
            <person name="Pommerening-Roeser A."/>
            <person name="Flores M."/>
            <person name="Palacios R."/>
            <person name="Brenner S."/>
            <person name="Gottschalk G."/>
            <person name="Schmitz R.A."/>
            <person name="Broughton W.J."/>
            <person name="Perret X."/>
            <person name="Strittmatter A.W."/>
            <person name="Streit W.R."/>
        </authorList>
    </citation>
    <scope>NUCLEOTIDE SEQUENCE [LARGE SCALE GENOMIC DNA]</scope>
    <source>
        <strain>NBRC 101917 / NGR234</strain>
    </source>
</reference>
<name>RS3_SINFN</name>
<keyword id="KW-1185">Reference proteome</keyword>
<keyword id="KW-0687">Ribonucleoprotein</keyword>
<keyword id="KW-0689">Ribosomal protein</keyword>
<keyword id="KW-0694">RNA-binding</keyword>
<keyword id="KW-0699">rRNA-binding</keyword>
<dbReference type="EMBL" id="CP001389">
    <property type="protein sequence ID" value="ACP24979.1"/>
    <property type="molecule type" value="Genomic_DNA"/>
</dbReference>
<dbReference type="RefSeq" id="WP_012707759.1">
    <property type="nucleotide sequence ID" value="NC_012587.1"/>
</dbReference>
<dbReference type="RefSeq" id="YP_002825732.1">
    <property type="nucleotide sequence ID" value="NC_012587.1"/>
</dbReference>
<dbReference type="SMR" id="C3MAY6"/>
<dbReference type="STRING" id="394.NGR_c11970"/>
<dbReference type="KEGG" id="rhi:NGR_c11970"/>
<dbReference type="PATRIC" id="fig|394.7.peg.4013"/>
<dbReference type="eggNOG" id="COG0092">
    <property type="taxonomic scope" value="Bacteria"/>
</dbReference>
<dbReference type="HOGENOM" id="CLU_058591_0_2_5"/>
<dbReference type="OrthoDB" id="9806396at2"/>
<dbReference type="Proteomes" id="UP000001054">
    <property type="component" value="Chromosome"/>
</dbReference>
<dbReference type="GO" id="GO:0022627">
    <property type="term" value="C:cytosolic small ribosomal subunit"/>
    <property type="evidence" value="ECO:0007669"/>
    <property type="project" value="TreeGrafter"/>
</dbReference>
<dbReference type="GO" id="GO:0003729">
    <property type="term" value="F:mRNA binding"/>
    <property type="evidence" value="ECO:0007669"/>
    <property type="project" value="UniProtKB-UniRule"/>
</dbReference>
<dbReference type="GO" id="GO:0019843">
    <property type="term" value="F:rRNA binding"/>
    <property type="evidence" value="ECO:0007669"/>
    <property type="project" value="UniProtKB-UniRule"/>
</dbReference>
<dbReference type="GO" id="GO:0003735">
    <property type="term" value="F:structural constituent of ribosome"/>
    <property type="evidence" value="ECO:0007669"/>
    <property type="project" value="InterPro"/>
</dbReference>
<dbReference type="GO" id="GO:0006412">
    <property type="term" value="P:translation"/>
    <property type="evidence" value="ECO:0007669"/>
    <property type="project" value="UniProtKB-UniRule"/>
</dbReference>
<dbReference type="CDD" id="cd02412">
    <property type="entry name" value="KH-II_30S_S3"/>
    <property type="match status" value="1"/>
</dbReference>
<dbReference type="FunFam" id="3.30.1140.32:FF:000001">
    <property type="entry name" value="30S ribosomal protein S3"/>
    <property type="match status" value="1"/>
</dbReference>
<dbReference type="FunFam" id="3.30.300.20:FF:000001">
    <property type="entry name" value="30S ribosomal protein S3"/>
    <property type="match status" value="1"/>
</dbReference>
<dbReference type="Gene3D" id="3.30.300.20">
    <property type="match status" value="1"/>
</dbReference>
<dbReference type="Gene3D" id="3.30.1140.32">
    <property type="entry name" value="Ribosomal protein S3, C-terminal domain"/>
    <property type="match status" value="1"/>
</dbReference>
<dbReference type="HAMAP" id="MF_01309_B">
    <property type="entry name" value="Ribosomal_uS3_B"/>
    <property type="match status" value="1"/>
</dbReference>
<dbReference type="InterPro" id="IPR004087">
    <property type="entry name" value="KH_dom"/>
</dbReference>
<dbReference type="InterPro" id="IPR015946">
    <property type="entry name" value="KH_dom-like_a/b"/>
</dbReference>
<dbReference type="InterPro" id="IPR004044">
    <property type="entry name" value="KH_dom_type_2"/>
</dbReference>
<dbReference type="InterPro" id="IPR009019">
    <property type="entry name" value="KH_sf_prok-type"/>
</dbReference>
<dbReference type="InterPro" id="IPR036419">
    <property type="entry name" value="Ribosomal_S3_C_sf"/>
</dbReference>
<dbReference type="InterPro" id="IPR005704">
    <property type="entry name" value="Ribosomal_uS3_bac-typ"/>
</dbReference>
<dbReference type="InterPro" id="IPR001351">
    <property type="entry name" value="Ribosomal_uS3_C"/>
</dbReference>
<dbReference type="InterPro" id="IPR018280">
    <property type="entry name" value="Ribosomal_uS3_CS"/>
</dbReference>
<dbReference type="NCBIfam" id="TIGR01009">
    <property type="entry name" value="rpsC_bact"/>
    <property type="match status" value="1"/>
</dbReference>
<dbReference type="PANTHER" id="PTHR11760">
    <property type="entry name" value="30S/40S RIBOSOMAL PROTEIN S3"/>
    <property type="match status" value="1"/>
</dbReference>
<dbReference type="PANTHER" id="PTHR11760:SF19">
    <property type="entry name" value="SMALL RIBOSOMAL SUBUNIT PROTEIN US3C"/>
    <property type="match status" value="1"/>
</dbReference>
<dbReference type="Pfam" id="PF07650">
    <property type="entry name" value="KH_2"/>
    <property type="match status" value="1"/>
</dbReference>
<dbReference type="Pfam" id="PF00189">
    <property type="entry name" value="Ribosomal_S3_C"/>
    <property type="match status" value="1"/>
</dbReference>
<dbReference type="SMART" id="SM00322">
    <property type="entry name" value="KH"/>
    <property type="match status" value="1"/>
</dbReference>
<dbReference type="SUPFAM" id="SSF54814">
    <property type="entry name" value="Prokaryotic type KH domain (KH-domain type II)"/>
    <property type="match status" value="1"/>
</dbReference>
<dbReference type="SUPFAM" id="SSF54821">
    <property type="entry name" value="Ribosomal protein S3 C-terminal domain"/>
    <property type="match status" value="1"/>
</dbReference>
<dbReference type="PROSITE" id="PS50823">
    <property type="entry name" value="KH_TYPE_2"/>
    <property type="match status" value="1"/>
</dbReference>
<dbReference type="PROSITE" id="PS00548">
    <property type="entry name" value="RIBOSOMAL_S3"/>
    <property type="match status" value="1"/>
</dbReference>
<feature type="chain" id="PRO_1000165506" description="Small ribosomal subunit protein uS3">
    <location>
        <begin position="1"/>
        <end position="237"/>
    </location>
</feature>
<feature type="domain" description="KH type-2" evidence="1">
    <location>
        <begin position="39"/>
        <end position="107"/>
    </location>
</feature>
<feature type="region of interest" description="Disordered" evidence="2">
    <location>
        <begin position="213"/>
        <end position="237"/>
    </location>
</feature>
<protein>
    <recommendedName>
        <fullName evidence="1">Small ribosomal subunit protein uS3</fullName>
    </recommendedName>
    <alternativeName>
        <fullName evidence="3">30S ribosomal protein S3</fullName>
    </alternativeName>
</protein>
<gene>
    <name evidence="1" type="primary">rpsC</name>
    <name type="ordered locus">NGR_c11970</name>
</gene>
<sequence length="237" mass="26628">MGQKINPIGFRLGINRTWDSRWFADNAEYGQLLHEDLKIRAYLMEELKAAGIAKVVIERPHKKCRVTIHSARPGLIIGKKGADIEKLRKKLSEMTNSETHLNIVEVRKPEVDATLVAQSIAQQLERRVAFRRAMKRAVQSAMRLGAEGIKITCAGRLGGAEIARTEWYREGRVPLHTLRADIDYGTAEAETAFGICGVKVWIFKGEILEHDPMASERRATESDNQGGGGRDRRRENA</sequence>
<proteinExistence type="inferred from homology"/>
<comment type="function">
    <text evidence="1">Binds the lower part of the 30S subunit head. Binds mRNA in the 70S ribosome, positioning it for translation.</text>
</comment>
<comment type="subunit">
    <text evidence="1">Part of the 30S ribosomal subunit. Forms a tight complex with proteins S10 and S14.</text>
</comment>
<comment type="similarity">
    <text evidence="1">Belongs to the universal ribosomal protein uS3 family.</text>
</comment>
<organism>
    <name type="scientific">Sinorhizobium fredii (strain NBRC 101917 / NGR234)</name>
    <dbReference type="NCBI Taxonomy" id="394"/>
    <lineage>
        <taxon>Bacteria</taxon>
        <taxon>Pseudomonadati</taxon>
        <taxon>Pseudomonadota</taxon>
        <taxon>Alphaproteobacteria</taxon>
        <taxon>Hyphomicrobiales</taxon>
        <taxon>Rhizobiaceae</taxon>
        <taxon>Sinorhizobium/Ensifer group</taxon>
        <taxon>Sinorhizobium</taxon>
    </lineage>
</organism>